<name>HYR1_CANAX</name>
<protein>
    <recommendedName>
        <fullName>Hyphally-regulated protein</fullName>
    </recommendedName>
</protein>
<proteinExistence type="evidence at transcript level"/>
<feature type="signal peptide" evidence="1">
    <location>
        <begin position="1"/>
        <end position="20"/>
    </location>
</feature>
<feature type="chain" id="PRO_0000021472" description="Hyphally-regulated protein">
    <location>
        <begin position="21"/>
        <end position="913"/>
    </location>
</feature>
<feature type="propeptide" id="PRO_0000021473" description="Removed in mature form" evidence="1">
    <location>
        <begin position="914"/>
        <end position="937"/>
    </location>
</feature>
<feature type="transmembrane region" description="Helical" evidence="1">
    <location>
        <begin position="42"/>
        <end position="62"/>
    </location>
</feature>
<feature type="repeat" description="1">
    <location>
        <begin position="610"/>
        <end position="613"/>
    </location>
</feature>
<feature type="repeat" description="2">
    <location>
        <begin position="666"/>
        <end position="669"/>
    </location>
</feature>
<feature type="repeat" description="3">
    <location>
        <begin position="680"/>
        <end position="683"/>
    </location>
</feature>
<feature type="repeat" description="4">
    <location>
        <begin position="690"/>
        <end position="693"/>
    </location>
</feature>
<feature type="repeat" description="5">
    <location>
        <begin position="698"/>
        <end position="701"/>
    </location>
</feature>
<feature type="repeat" description="6">
    <location>
        <begin position="738"/>
        <end position="741"/>
    </location>
</feature>
<feature type="repeat" description="7">
    <location>
        <begin position="750"/>
        <end position="753"/>
    </location>
</feature>
<feature type="region of interest" description="Disordered" evidence="2">
    <location>
        <begin position="332"/>
        <end position="483"/>
    </location>
</feature>
<feature type="region of interest" description="Disordered" evidence="2">
    <location>
        <begin position="567"/>
        <end position="857"/>
    </location>
</feature>
<feature type="region of interest" description="7 X 4 AA repeats of N-E-G-S">
    <location>
        <begin position="610"/>
        <end position="753"/>
    </location>
</feature>
<feature type="compositionally biased region" description="Low complexity" evidence="2">
    <location>
        <begin position="344"/>
        <end position="392"/>
    </location>
</feature>
<feature type="compositionally biased region" description="Polar residues" evidence="2">
    <location>
        <begin position="393"/>
        <end position="414"/>
    </location>
</feature>
<feature type="compositionally biased region" description="Low complexity" evidence="2">
    <location>
        <begin position="415"/>
        <end position="475"/>
    </location>
</feature>
<feature type="compositionally biased region" description="Low complexity" evidence="2">
    <location>
        <begin position="567"/>
        <end position="590"/>
    </location>
</feature>
<feature type="compositionally biased region" description="Gly residues" evidence="2">
    <location>
        <begin position="591"/>
        <end position="609"/>
    </location>
</feature>
<feature type="compositionally biased region" description="Gly residues" evidence="2">
    <location>
        <begin position="619"/>
        <end position="631"/>
    </location>
</feature>
<feature type="compositionally biased region" description="Gly residues" evidence="2">
    <location>
        <begin position="641"/>
        <end position="665"/>
    </location>
</feature>
<feature type="compositionally biased region" description="Low complexity" evidence="2">
    <location>
        <begin position="666"/>
        <end position="682"/>
    </location>
</feature>
<feature type="compositionally biased region" description="Gly residues" evidence="2">
    <location>
        <begin position="699"/>
        <end position="725"/>
    </location>
</feature>
<feature type="compositionally biased region" description="Low complexity" evidence="2">
    <location>
        <begin position="726"/>
        <end position="742"/>
    </location>
</feature>
<feature type="compositionally biased region" description="Gly residues" evidence="2">
    <location>
        <begin position="743"/>
        <end position="801"/>
    </location>
</feature>
<feature type="compositionally biased region" description="Low complexity" evidence="2">
    <location>
        <begin position="802"/>
        <end position="814"/>
    </location>
</feature>
<feature type="compositionally biased region" description="Basic and acidic residues" evidence="2">
    <location>
        <begin position="817"/>
        <end position="829"/>
    </location>
</feature>
<feature type="compositionally biased region" description="Polar residues" evidence="2">
    <location>
        <begin position="841"/>
        <end position="851"/>
    </location>
</feature>
<feature type="lipid moiety-binding region" description="GPI-anchor amidated asparagine" evidence="1">
    <location>
        <position position="913"/>
    </location>
</feature>
<feature type="glycosylation site" description="N-linked (GlcNAc...) asparagine" evidence="1">
    <location>
        <position position="16"/>
    </location>
</feature>
<feature type="glycosylation site" description="N-linked (GlcNAc...) asparagine" evidence="1">
    <location>
        <position position="236"/>
    </location>
</feature>
<feature type="glycosylation site" description="N-linked (GlcNAc...) asparagine" evidence="1">
    <location>
        <position position="449"/>
    </location>
</feature>
<feature type="glycosylation site" description="N-linked (GlcNAc...) asparagine" evidence="1">
    <location>
        <position position="488"/>
    </location>
</feature>
<feature type="glycosylation site" description="N-linked (GlcNAc...) asparagine" evidence="1">
    <location>
        <position position="580"/>
    </location>
</feature>
<feature type="glycosylation site" description="N-linked (GlcNAc...) asparagine" evidence="1">
    <location>
        <position position="585"/>
    </location>
</feature>
<feature type="glycosylation site" description="N-linked (GlcNAc...) asparagine" evidence="1">
    <location>
        <position position="595"/>
    </location>
</feature>
<feature type="glycosylation site" description="N-linked (GlcNAc...) asparagine" evidence="1">
    <location>
        <position position="603"/>
    </location>
</feature>
<feature type="glycosylation site" description="N-linked (GlcNAc...) asparagine" evidence="1">
    <location>
        <position position="619"/>
    </location>
</feature>
<feature type="glycosylation site" description="N-linked (GlcNAc...) asparagine" evidence="1">
    <location>
        <position position="631"/>
    </location>
</feature>
<feature type="glycosylation site" description="N-linked (GlcNAc...) asparagine" evidence="1">
    <location>
        <position position="641"/>
    </location>
</feature>
<feature type="glycosylation site" description="N-linked (GlcNAc...) asparagine" evidence="1">
    <location>
        <position position="649"/>
    </location>
</feature>
<feature type="glycosylation site" description="N-linked (GlcNAc...) asparagine" evidence="1">
    <location>
        <position position="711"/>
    </location>
</feature>
<feature type="glycosylation site" description="N-linked (GlcNAc...) asparagine" evidence="1">
    <location>
        <position position="747"/>
    </location>
</feature>
<feature type="glycosylation site" description="N-linked (GlcNAc...) asparagine" evidence="1">
    <location>
        <position position="759"/>
    </location>
</feature>
<feature type="glycosylation site" description="N-linked (GlcNAc...) asparagine" evidence="1">
    <location>
        <position position="773"/>
    </location>
</feature>
<feature type="glycosylation site" description="N-linked (GlcNAc...) asparagine" evidence="1">
    <location>
        <position position="897"/>
    </location>
</feature>
<feature type="glycosylation site" description="N-linked (GlcNAc...) asparagine" evidence="1">
    <location>
        <position position="913"/>
    </location>
</feature>
<accession>P46591</accession>
<keyword id="KW-1003">Cell membrane</keyword>
<keyword id="KW-0134">Cell wall</keyword>
<keyword id="KW-0325">Glycoprotein</keyword>
<keyword id="KW-0336">GPI-anchor</keyword>
<keyword id="KW-0449">Lipoprotein</keyword>
<keyword id="KW-0472">Membrane</keyword>
<keyword id="KW-0677">Repeat</keyword>
<keyword id="KW-0964">Secreted</keyword>
<keyword id="KW-0732">Signal</keyword>
<keyword id="KW-0812">Transmembrane</keyword>
<keyword id="KW-1133">Transmembrane helix</keyword>
<organism>
    <name type="scientific">Candida albicans</name>
    <name type="common">Yeast</name>
    <dbReference type="NCBI Taxonomy" id="5476"/>
    <lineage>
        <taxon>Eukaryota</taxon>
        <taxon>Fungi</taxon>
        <taxon>Dikarya</taxon>
        <taxon>Ascomycota</taxon>
        <taxon>Saccharomycotina</taxon>
        <taxon>Pichiomycetes</taxon>
        <taxon>Debaryomycetaceae</taxon>
        <taxon>Candida/Lodderomyces clade</taxon>
        <taxon>Candida</taxon>
    </lineage>
</organism>
<sequence length="937" mass="93700">MKVVSNFIFTILLTLNLSAALEVVTSRIDRGGIQGFHGDVKVHSGATWAILGTTLCSFFGGLEVEKGASLFIKSDNGPVLALNVALSTLVRPVINNGVISLNSKSSTSFSNFDIGGSSFTNNGEIYLDSSGLVKSTAYLYAREWTNNGLIVAYQNQKAAGNIAFGTAYQTITNNGQICLRHQDFVPATKIKGTGCVTADEDTWIKLGNTILSVEPTHNFYLKDSKSSLIVHAVSSNQTFTVHGFGNGNKLGLTLPLTGNRDHFRFEYYPDTGILQLRADALPQYFKIGKGYDSKLFRIVNSRGLKNAVTYDGPVPNNEIPAVCLIPCTNGPSAPESESDLNTPTTSSIETSSYSSAATESSVVSESSSAVDSLTSSSLSSKSESSDVVSSTTNIESSSTAIETTMNSESSTDAGSSSISQSESSSTAITSSSETSSSESMSASSTTASNTSIETDSGIVSQSESSSNALSSTEQSITSSPGQSTIYVNSTVTSTITSCDENKCTEDVVTIFTTVPCSTDCVPTTGDIPMSTSYTQRTVTSTITNCDEVSCSQDVVTYTTNVPHTTVDATTTTTTSTGGDNSTGGNESGSNHGPGNGSTEGSGNGSGAGSNEGSQSGPNNGSGSGSEGGSNNGSGSDSGSNNGSGSGSNNGSGSGSTEGSEGGSGSNEGSQSGSGSQPGPNEGSEGGSGSNEGSNHGSNEGSGSGSGSGSNNGSGSGSQSGSGSGSQSGSESGSNSGSNEGSNPGAGNGSNEGSGQGSGNGSEAGSGQGSGPNNGSGSGHNDGSGSGSNQGSNPGAGSGSGSESGSKAGSHSGSNEGAKTDSIEGFHTESKPGFNTGAHTDATVTGNSVANPVTTSTESDTTISVTVSITSYMTGFDGKPKPFTTVDVIPVPHSMPSNTTDSSSSVPTIDTNENGSSIVTGGKSILFGLIVSMVVLFM</sequence>
<evidence type="ECO:0000255" key="1"/>
<evidence type="ECO:0000256" key="2">
    <source>
        <dbReference type="SAM" id="MobiDB-lite"/>
    </source>
</evidence>
<evidence type="ECO:0000305" key="3"/>
<reference key="1">
    <citation type="journal article" date="1996" name="J. Bacteriol.">
        <title>The Candida albicans HYR1 gene, which is activated in response to hyphal development, belongs to a gene family encoding yeast cell wall proteins.</title>
        <authorList>
            <person name="Bailey D.A."/>
            <person name="Feldmann P.J.F."/>
            <person name="Bovey M."/>
            <person name="Gow N.A.R."/>
            <person name="Brown A.J.P."/>
        </authorList>
    </citation>
    <scope>NUCLEOTIDE SEQUENCE [GENOMIC DNA]</scope>
    <source>
        <strain>ATCC 10261 / CBS 2718 / NBRC 1061 / FMJ 1011</strain>
    </source>
</reference>
<comment type="function">
    <text evidence="3">Nonessential component of the hyphal cell wall.</text>
</comment>
<comment type="subcellular location">
    <subcellularLocation>
        <location evidence="3">Cell membrane</location>
        <topology evidence="3">Lipid-anchor</topology>
        <topology evidence="3">GPI-anchor</topology>
    </subcellularLocation>
    <subcellularLocation>
        <location>Secreted</location>
        <location>Cell wall</location>
    </subcellularLocation>
</comment>
<comment type="developmental stage">
    <text>Abundant in hyphae.</text>
</comment>
<comment type="induction">
    <text>Induced specifically in response to hyphal development.</text>
</comment>
<gene>
    <name type="primary">HYR1</name>
</gene>
<dbReference type="EMBL" id="Z50123">
    <property type="protein sequence ID" value="CAA90485.1"/>
    <property type="molecule type" value="Genomic_DNA"/>
</dbReference>
<dbReference type="PIR" id="S58135">
    <property type="entry name" value="S58135"/>
</dbReference>
<dbReference type="SMR" id="P46591"/>
<dbReference type="GlyCosmos" id="P46591">
    <property type="glycosylation" value="18 sites, No reported glycans"/>
</dbReference>
<dbReference type="VEuPathDB" id="FungiDB:C1_13450W_A"/>
<dbReference type="VEuPathDB" id="FungiDB:CAWG_00106"/>
<dbReference type="GO" id="GO:0005576">
    <property type="term" value="C:extracellular region"/>
    <property type="evidence" value="ECO:0007669"/>
    <property type="project" value="UniProtKB-KW"/>
</dbReference>
<dbReference type="GO" id="GO:0009277">
    <property type="term" value="C:fungal-type cell wall"/>
    <property type="evidence" value="ECO:0007669"/>
    <property type="project" value="UniProtKB-ARBA"/>
</dbReference>
<dbReference type="GO" id="GO:0005886">
    <property type="term" value="C:plasma membrane"/>
    <property type="evidence" value="ECO:0007669"/>
    <property type="project" value="UniProtKB-SubCell"/>
</dbReference>
<dbReference type="GO" id="GO:0098552">
    <property type="term" value="C:side of membrane"/>
    <property type="evidence" value="ECO:0007669"/>
    <property type="project" value="UniProtKB-KW"/>
</dbReference>
<dbReference type="InterPro" id="IPR021031">
    <property type="entry name" value="Hyphal-reg_cell_wall_N"/>
</dbReference>
<dbReference type="Pfam" id="PF11765">
    <property type="entry name" value="Hyphal_reg_CWP"/>
    <property type="match status" value="1"/>
</dbReference>